<dbReference type="EMBL" id="CR859144">
    <property type="protein sequence ID" value="CAH91335.1"/>
    <property type="molecule type" value="mRNA"/>
</dbReference>
<dbReference type="RefSeq" id="NP_001127404.1">
    <property type="nucleotide sequence ID" value="NM_001133932.3"/>
</dbReference>
<dbReference type="ESTHER" id="ponab-F135A">
    <property type="family name" value="Duf_676"/>
</dbReference>
<dbReference type="GeneID" id="100174474"/>
<dbReference type="KEGG" id="pon:100174474"/>
<dbReference type="CTD" id="57579"/>
<dbReference type="eggNOG" id="KOG2205">
    <property type="taxonomic scope" value="Eukaryota"/>
</dbReference>
<dbReference type="HOGENOM" id="CLU_003176_0_0_1"/>
<dbReference type="InParanoid" id="Q5RA75"/>
<dbReference type="OrthoDB" id="273452at2759"/>
<dbReference type="Proteomes" id="UP000001595">
    <property type="component" value="Unplaced"/>
</dbReference>
<dbReference type="FunFam" id="3.40.50.1820:FF:000004">
    <property type="entry name" value="Protein FAM135A isoform a"/>
    <property type="match status" value="1"/>
</dbReference>
<dbReference type="Gene3D" id="3.40.50.1820">
    <property type="entry name" value="alpha/beta hydrolase"/>
    <property type="match status" value="1"/>
</dbReference>
<dbReference type="InterPro" id="IPR029058">
    <property type="entry name" value="AB_hydrolase_fold"/>
</dbReference>
<dbReference type="InterPro" id="IPR022122">
    <property type="entry name" value="DUF3657"/>
</dbReference>
<dbReference type="InterPro" id="IPR007751">
    <property type="entry name" value="DUF676_lipase-like"/>
</dbReference>
<dbReference type="InterPro" id="IPR044294">
    <property type="entry name" value="Lipase-like"/>
</dbReference>
<dbReference type="PANTHER" id="PTHR12482">
    <property type="entry name" value="LIPASE ROG1-RELATED-RELATED"/>
    <property type="match status" value="1"/>
</dbReference>
<dbReference type="PANTHER" id="PTHR12482:SF40">
    <property type="entry name" value="PROTEIN FAM135A"/>
    <property type="match status" value="1"/>
</dbReference>
<dbReference type="Pfam" id="PF12394">
    <property type="entry name" value="DUF3657"/>
    <property type="match status" value="1"/>
</dbReference>
<dbReference type="Pfam" id="PF05057">
    <property type="entry name" value="DUF676"/>
    <property type="match status" value="1"/>
</dbReference>
<dbReference type="SUPFAM" id="SSF53474">
    <property type="entry name" value="alpha/beta-Hydrolases"/>
    <property type="match status" value="1"/>
</dbReference>
<organism>
    <name type="scientific">Pongo abelii</name>
    <name type="common">Sumatran orangutan</name>
    <name type="synonym">Pongo pygmaeus abelii</name>
    <dbReference type="NCBI Taxonomy" id="9601"/>
    <lineage>
        <taxon>Eukaryota</taxon>
        <taxon>Metazoa</taxon>
        <taxon>Chordata</taxon>
        <taxon>Craniata</taxon>
        <taxon>Vertebrata</taxon>
        <taxon>Euteleostomi</taxon>
        <taxon>Mammalia</taxon>
        <taxon>Eutheria</taxon>
        <taxon>Euarchontoglires</taxon>
        <taxon>Primates</taxon>
        <taxon>Haplorrhini</taxon>
        <taxon>Catarrhini</taxon>
        <taxon>Hominidae</taxon>
        <taxon>Pongo</taxon>
    </lineage>
</organism>
<sequence length="1095" mass="123780">MTEVQAMVEFSVELNKFYNVDLFQRGFYQIRSSMKIPSRIPHRVEASLLHATGMTLAFPASVHDSLICSKTFQILYKNEEVVLNDVMIFKVKMLLDERKIEETLEEMNFLLSLDLHFTDGDYSADDLNALQLISSRTLKLHFSPHRGLHHHVNVMFDYFHLSVVSVTVHASLVALHQPLISFPRPVKTTWLNRNAPAQNKDSVIPTLESVVFGINYTKQLSPDGCSFIIADSFLHHAYRFHYTLCATLLLAFKGLHSYFITVTEEIPSCQKLELEEMDVEARLTELCEEVKKIENPDELAELINMNLAQLCSLLMALWGQFLEVITLHEELRILLAQEHHTLRVRRFSEAFFCFEHSREAAIAYQELHAQSHLQMCTAIKNTSFCSSLPPLPIECSELDGDLNSLPIIFEDRYLDSVTEGKLDISQDDSEITQMEHNLASRRSSDDCRDHQTTPSLGARTIEIKPSNKDPFSGEKITVKLGPWTELRQEEILVDNLLPNFESLESNDEDTSSDVKSSCSSKPNLDTMCKGFQSPHKSNNSTGTAITLNSKLICLGTPCVISGSISTNTDVSEDRTMKKNSDVLNLKQMYSEIPTVESETHLGTSDPFSASTDIVKQGLVENYFGSQSSTDISDTCAVSYSNALSPQKDTSEKEISNLQQEQGKEDEEEEQDQQMVQNGYYEETDYSALDGTINAHYTSRDELMEERLIKSEKINSDYLRDGINMPTVCTSGCLSFPSAPRESPCNVKYSSKSKFDAITKQPSSTSYNFTSSISWYMSSPKPQIQAFLQAKEELKLLKLPGFMYSEVPLLASSVPYFSVEEEDGSEDGVHLIVCVHGLDGNSADLRLVKTYIELGLPGGRIDFLMSERNQNDTFADFDSMTDRLLDEIIQYIQIYSLTVSKISFIGHSLGNLIIRSVLTRPRFKYYLNKLHTFLSLSGPHLGTLYNSSALVNTGLWFMQKWKKSGSLLQLTCRDHSDPRQTFLYKLSKKAGLHYFKNVVLVGSLQDRYVPYHSARIEMCKTALKDKQSGQIYSEMIHNLLQPVLQSKDCNLVRYNVINALPNTADSLIGRAAHIAVLDSEIFLEKFFLVAALKYFQ</sequence>
<protein>
    <recommendedName>
        <fullName>Protein FAM135A</fullName>
    </recommendedName>
</protein>
<proteinExistence type="evidence at transcript level"/>
<name>F135A_PONAB</name>
<comment type="similarity">
    <text evidence="3">Belongs to the FAM135 family.</text>
</comment>
<evidence type="ECO:0000255" key="1"/>
<evidence type="ECO:0000256" key="2">
    <source>
        <dbReference type="SAM" id="MobiDB-lite"/>
    </source>
</evidence>
<evidence type="ECO:0000305" key="3"/>
<gene>
    <name type="primary">FAM135A</name>
</gene>
<keyword id="KW-0175">Coiled coil</keyword>
<keyword id="KW-1185">Reference proteome</keyword>
<accession>Q5RA75</accession>
<feature type="chain" id="PRO_0000314170" description="Protein FAM135A">
    <location>
        <begin position="1"/>
        <end position="1095"/>
    </location>
</feature>
<feature type="region of interest" description="Disordered" evidence="2">
    <location>
        <begin position="643"/>
        <end position="673"/>
    </location>
</feature>
<feature type="coiled-coil region" evidence="1">
    <location>
        <begin position="269"/>
        <end position="295"/>
    </location>
</feature>
<feature type="coiled-coil region" evidence="1">
    <location>
        <begin position="646"/>
        <end position="670"/>
    </location>
</feature>
<reference key="1">
    <citation type="submission" date="2004-11" db="EMBL/GenBank/DDBJ databases">
        <authorList>
            <consortium name="The German cDNA consortium"/>
        </authorList>
    </citation>
    <scope>NUCLEOTIDE SEQUENCE [LARGE SCALE MRNA]</scope>
    <source>
        <tissue>Brain cortex</tissue>
    </source>
</reference>